<organism>
    <name type="scientific">Salmonella paratyphi C (strain RKS4594)</name>
    <dbReference type="NCBI Taxonomy" id="476213"/>
    <lineage>
        <taxon>Bacteria</taxon>
        <taxon>Pseudomonadati</taxon>
        <taxon>Pseudomonadota</taxon>
        <taxon>Gammaproteobacteria</taxon>
        <taxon>Enterobacterales</taxon>
        <taxon>Enterobacteriaceae</taxon>
        <taxon>Salmonella</taxon>
    </lineage>
</organism>
<evidence type="ECO:0000255" key="1">
    <source>
        <dbReference type="HAMAP-Rule" id="MF_00501"/>
    </source>
</evidence>
<evidence type="ECO:0000305" key="2"/>
<sequence length="70" mass="7719">MKKGIHPNYVEITATCSCGNVIKTHSTVGHDLNLDVCGKCHPFFTGKQRVVDTGGRVERFNKRFSIPGSK</sequence>
<keyword id="KW-0479">Metal-binding</keyword>
<keyword id="KW-0687">Ribonucleoprotein</keyword>
<keyword id="KW-0689">Ribosomal protein</keyword>
<keyword id="KW-0694">RNA-binding</keyword>
<keyword id="KW-0699">rRNA-binding</keyword>
<keyword id="KW-0862">Zinc</keyword>
<comment type="function">
    <text evidence="1">Binds the 23S rRNA.</text>
</comment>
<comment type="cofactor">
    <cofactor evidence="1">
        <name>Zn(2+)</name>
        <dbReference type="ChEBI" id="CHEBI:29105"/>
    </cofactor>
    <text evidence="1">Binds 1 zinc ion per subunit.</text>
</comment>
<comment type="subunit">
    <text evidence="1">Part of the 50S ribosomal subunit.</text>
</comment>
<comment type="similarity">
    <text evidence="1">Belongs to the bacterial ribosomal protein bL31 family. Type A subfamily.</text>
</comment>
<reference key="1">
    <citation type="journal article" date="2009" name="PLoS ONE">
        <title>Salmonella paratyphi C: genetic divergence from Salmonella choleraesuis and pathogenic convergence with Salmonella typhi.</title>
        <authorList>
            <person name="Liu W.-Q."/>
            <person name="Feng Y."/>
            <person name="Wang Y."/>
            <person name="Zou Q.-H."/>
            <person name="Chen F."/>
            <person name="Guo J.-T."/>
            <person name="Peng Y.-H."/>
            <person name="Jin Y."/>
            <person name="Li Y.-G."/>
            <person name="Hu S.-N."/>
            <person name="Johnston R.N."/>
            <person name="Liu G.-R."/>
            <person name="Liu S.-L."/>
        </authorList>
    </citation>
    <scope>NUCLEOTIDE SEQUENCE [LARGE SCALE GENOMIC DNA]</scope>
    <source>
        <strain>RKS4594</strain>
    </source>
</reference>
<protein>
    <recommendedName>
        <fullName evidence="1">Large ribosomal subunit protein bL31</fullName>
    </recommendedName>
    <alternativeName>
        <fullName evidence="2">50S ribosomal protein L31</fullName>
    </alternativeName>
</protein>
<name>RL31_SALPC</name>
<feature type="chain" id="PRO_1000176974" description="Large ribosomal subunit protein bL31">
    <location>
        <begin position="1"/>
        <end position="70"/>
    </location>
</feature>
<feature type="binding site" evidence="1">
    <location>
        <position position="16"/>
    </location>
    <ligand>
        <name>Zn(2+)</name>
        <dbReference type="ChEBI" id="CHEBI:29105"/>
    </ligand>
</feature>
<feature type="binding site" evidence="1">
    <location>
        <position position="18"/>
    </location>
    <ligand>
        <name>Zn(2+)</name>
        <dbReference type="ChEBI" id="CHEBI:29105"/>
    </ligand>
</feature>
<feature type="binding site" evidence="1">
    <location>
        <position position="37"/>
    </location>
    <ligand>
        <name>Zn(2+)</name>
        <dbReference type="ChEBI" id="CHEBI:29105"/>
    </ligand>
</feature>
<feature type="binding site" evidence="1">
    <location>
        <position position="40"/>
    </location>
    <ligand>
        <name>Zn(2+)</name>
        <dbReference type="ChEBI" id="CHEBI:29105"/>
    </ligand>
</feature>
<gene>
    <name evidence="1" type="primary">rpmE</name>
    <name type="ordered locus">SPC_4202</name>
</gene>
<proteinExistence type="inferred from homology"/>
<dbReference type="EMBL" id="CP000857">
    <property type="protein sequence ID" value="ACN48265.1"/>
    <property type="molecule type" value="Genomic_DNA"/>
</dbReference>
<dbReference type="RefSeq" id="WP_000715284.1">
    <property type="nucleotide sequence ID" value="NC_012125.1"/>
</dbReference>
<dbReference type="SMR" id="C0Q446"/>
<dbReference type="GeneID" id="66758349"/>
<dbReference type="KEGG" id="sei:SPC_4202"/>
<dbReference type="HOGENOM" id="CLU_114306_4_3_6"/>
<dbReference type="Proteomes" id="UP000001599">
    <property type="component" value="Chromosome"/>
</dbReference>
<dbReference type="GO" id="GO:1990904">
    <property type="term" value="C:ribonucleoprotein complex"/>
    <property type="evidence" value="ECO:0007669"/>
    <property type="project" value="UniProtKB-KW"/>
</dbReference>
<dbReference type="GO" id="GO:0005840">
    <property type="term" value="C:ribosome"/>
    <property type="evidence" value="ECO:0007669"/>
    <property type="project" value="UniProtKB-KW"/>
</dbReference>
<dbReference type="GO" id="GO:0046872">
    <property type="term" value="F:metal ion binding"/>
    <property type="evidence" value="ECO:0007669"/>
    <property type="project" value="UniProtKB-KW"/>
</dbReference>
<dbReference type="GO" id="GO:0019843">
    <property type="term" value="F:rRNA binding"/>
    <property type="evidence" value="ECO:0007669"/>
    <property type="project" value="UniProtKB-KW"/>
</dbReference>
<dbReference type="GO" id="GO:0003735">
    <property type="term" value="F:structural constituent of ribosome"/>
    <property type="evidence" value="ECO:0007669"/>
    <property type="project" value="InterPro"/>
</dbReference>
<dbReference type="GO" id="GO:0006412">
    <property type="term" value="P:translation"/>
    <property type="evidence" value="ECO:0007669"/>
    <property type="project" value="UniProtKB-UniRule"/>
</dbReference>
<dbReference type="FunFam" id="4.10.830.30:FF:000001">
    <property type="entry name" value="50S ribosomal protein L31"/>
    <property type="match status" value="1"/>
</dbReference>
<dbReference type="Gene3D" id="4.10.830.30">
    <property type="entry name" value="Ribosomal protein L31"/>
    <property type="match status" value="1"/>
</dbReference>
<dbReference type="HAMAP" id="MF_00501">
    <property type="entry name" value="Ribosomal_bL31_1"/>
    <property type="match status" value="1"/>
</dbReference>
<dbReference type="InterPro" id="IPR034704">
    <property type="entry name" value="Ribosomal_bL28/bL31-like_sf"/>
</dbReference>
<dbReference type="InterPro" id="IPR002150">
    <property type="entry name" value="Ribosomal_bL31"/>
</dbReference>
<dbReference type="InterPro" id="IPR027491">
    <property type="entry name" value="Ribosomal_bL31_A"/>
</dbReference>
<dbReference type="InterPro" id="IPR042105">
    <property type="entry name" value="Ribosomal_bL31_sf"/>
</dbReference>
<dbReference type="NCBIfam" id="TIGR00105">
    <property type="entry name" value="L31"/>
    <property type="match status" value="1"/>
</dbReference>
<dbReference type="NCBIfam" id="NF000612">
    <property type="entry name" value="PRK00019.1"/>
    <property type="match status" value="1"/>
</dbReference>
<dbReference type="NCBIfam" id="NF001809">
    <property type="entry name" value="PRK00528.1"/>
    <property type="match status" value="1"/>
</dbReference>
<dbReference type="PANTHER" id="PTHR33280">
    <property type="entry name" value="50S RIBOSOMAL PROTEIN L31, CHLOROPLASTIC"/>
    <property type="match status" value="1"/>
</dbReference>
<dbReference type="PANTHER" id="PTHR33280:SF6">
    <property type="entry name" value="LARGE RIBOSOMAL SUBUNIT PROTEIN BL31A"/>
    <property type="match status" value="1"/>
</dbReference>
<dbReference type="Pfam" id="PF01197">
    <property type="entry name" value="Ribosomal_L31"/>
    <property type="match status" value="1"/>
</dbReference>
<dbReference type="PRINTS" id="PR01249">
    <property type="entry name" value="RIBOSOMALL31"/>
</dbReference>
<dbReference type="SUPFAM" id="SSF143800">
    <property type="entry name" value="L28p-like"/>
    <property type="match status" value="1"/>
</dbReference>
<dbReference type="PROSITE" id="PS01143">
    <property type="entry name" value="RIBOSOMAL_L31"/>
    <property type="match status" value="1"/>
</dbReference>
<accession>C0Q446</accession>